<accession>A4FIR1</accession>
<proteinExistence type="inferred from homology"/>
<protein>
    <recommendedName>
        <fullName evidence="1">Catalase-peroxidase</fullName>
        <shortName evidence="1">CP</shortName>
        <ecNumber evidence="1">1.11.1.21</ecNumber>
    </recommendedName>
    <alternativeName>
        <fullName evidence="1">Peroxidase/catalase</fullName>
    </alternativeName>
</protein>
<comment type="function">
    <text evidence="1">Bifunctional enzyme with both catalase and broad-spectrum peroxidase activity.</text>
</comment>
<comment type="catalytic activity">
    <reaction evidence="1">
        <text>H2O2 + AH2 = A + 2 H2O</text>
        <dbReference type="Rhea" id="RHEA:30275"/>
        <dbReference type="ChEBI" id="CHEBI:13193"/>
        <dbReference type="ChEBI" id="CHEBI:15377"/>
        <dbReference type="ChEBI" id="CHEBI:16240"/>
        <dbReference type="ChEBI" id="CHEBI:17499"/>
        <dbReference type="EC" id="1.11.1.21"/>
    </reaction>
</comment>
<comment type="catalytic activity">
    <reaction evidence="1">
        <text>2 H2O2 = O2 + 2 H2O</text>
        <dbReference type="Rhea" id="RHEA:20309"/>
        <dbReference type="ChEBI" id="CHEBI:15377"/>
        <dbReference type="ChEBI" id="CHEBI:15379"/>
        <dbReference type="ChEBI" id="CHEBI:16240"/>
        <dbReference type="EC" id="1.11.1.21"/>
    </reaction>
</comment>
<comment type="cofactor">
    <cofactor evidence="1">
        <name>heme b</name>
        <dbReference type="ChEBI" id="CHEBI:60344"/>
    </cofactor>
    <text evidence="1">Binds 1 heme b (iron(II)-protoporphyrin IX) group per dimer.</text>
</comment>
<comment type="subunit">
    <text evidence="1">Homodimer or homotetramer.</text>
</comment>
<comment type="PTM">
    <text evidence="1">Formation of the three residue Trp-Tyr-Met cross-link is important for the catalase, but not the peroxidase activity of the enzyme.</text>
</comment>
<comment type="similarity">
    <text evidence="1">Belongs to the peroxidase family. Peroxidase/catalase subfamily.</text>
</comment>
<feature type="chain" id="PRO_0000354900" description="Catalase-peroxidase">
    <location>
        <begin position="1"/>
        <end position="737"/>
    </location>
</feature>
<feature type="region of interest" description="Disordered" evidence="2">
    <location>
        <begin position="1"/>
        <end position="29"/>
    </location>
</feature>
<feature type="active site" description="Proton acceptor" evidence="1">
    <location>
        <position position="102"/>
    </location>
</feature>
<feature type="binding site" description="axial binding residue" evidence="1">
    <location>
        <position position="268"/>
    </location>
    <ligand>
        <name>heme b</name>
        <dbReference type="ChEBI" id="CHEBI:60344"/>
    </ligand>
    <ligandPart>
        <name>Fe</name>
        <dbReference type="ChEBI" id="CHEBI:18248"/>
    </ligandPart>
</feature>
<feature type="site" description="Transition state stabilizer" evidence="1">
    <location>
        <position position="98"/>
    </location>
</feature>
<feature type="cross-link" description="Tryptophyl-tyrosyl-methioninium (Trp-Tyr) (with M-253)" evidence="1">
    <location>
        <begin position="101"/>
        <end position="227"/>
    </location>
</feature>
<feature type="cross-link" description="Tryptophyl-tyrosyl-methioninium (Tyr-Met) (with W-101)" evidence="1">
    <location>
        <begin position="227"/>
        <end position="253"/>
    </location>
</feature>
<reference key="1">
    <citation type="journal article" date="2007" name="Nat. Biotechnol.">
        <title>Complete genome sequence of the erythromycin-producing bacterium Saccharopolyspora erythraea NRRL23338.</title>
        <authorList>
            <person name="Oliynyk M."/>
            <person name="Samborskyy M."/>
            <person name="Lester J.B."/>
            <person name="Mironenko T."/>
            <person name="Scott N."/>
            <person name="Dickens S."/>
            <person name="Haydock S.F."/>
            <person name="Leadlay P.F."/>
        </authorList>
    </citation>
    <scope>NUCLEOTIDE SEQUENCE [LARGE SCALE GENOMIC DNA]</scope>
    <source>
        <strain>ATCC 11635 / DSM 40517 / JCM 4748 / NBRC 13426 / NCIMB 8594 / NRRL 2338</strain>
    </source>
</reference>
<keyword id="KW-0349">Heme</keyword>
<keyword id="KW-0376">Hydrogen peroxide</keyword>
<keyword id="KW-0408">Iron</keyword>
<keyword id="KW-0479">Metal-binding</keyword>
<keyword id="KW-0560">Oxidoreductase</keyword>
<keyword id="KW-0575">Peroxidase</keyword>
<keyword id="KW-1185">Reference proteome</keyword>
<evidence type="ECO:0000255" key="1">
    <source>
        <dbReference type="HAMAP-Rule" id="MF_01961"/>
    </source>
</evidence>
<evidence type="ECO:0000256" key="2">
    <source>
        <dbReference type="SAM" id="MobiDB-lite"/>
    </source>
</evidence>
<dbReference type="EC" id="1.11.1.21" evidence="1"/>
<dbReference type="EMBL" id="AM420293">
    <property type="protein sequence ID" value="CAM03936.1"/>
    <property type="molecule type" value="Genomic_DNA"/>
</dbReference>
<dbReference type="RefSeq" id="WP_009943439.1">
    <property type="nucleotide sequence ID" value="NC_009142.1"/>
</dbReference>
<dbReference type="SMR" id="A4FIR1"/>
<dbReference type="STRING" id="405948.SACE_4668"/>
<dbReference type="PeroxiBase" id="5232">
    <property type="entry name" value="SerCP01"/>
</dbReference>
<dbReference type="KEGG" id="sen:SACE_4668"/>
<dbReference type="eggNOG" id="COG0376">
    <property type="taxonomic scope" value="Bacteria"/>
</dbReference>
<dbReference type="HOGENOM" id="CLU_025424_2_0_11"/>
<dbReference type="OrthoDB" id="9759743at2"/>
<dbReference type="Proteomes" id="UP000006728">
    <property type="component" value="Chromosome"/>
</dbReference>
<dbReference type="GO" id="GO:0005829">
    <property type="term" value="C:cytosol"/>
    <property type="evidence" value="ECO:0007669"/>
    <property type="project" value="TreeGrafter"/>
</dbReference>
<dbReference type="GO" id="GO:0004096">
    <property type="term" value="F:catalase activity"/>
    <property type="evidence" value="ECO:0007669"/>
    <property type="project" value="UniProtKB-UniRule"/>
</dbReference>
<dbReference type="GO" id="GO:0020037">
    <property type="term" value="F:heme binding"/>
    <property type="evidence" value="ECO:0007669"/>
    <property type="project" value="InterPro"/>
</dbReference>
<dbReference type="GO" id="GO:0046872">
    <property type="term" value="F:metal ion binding"/>
    <property type="evidence" value="ECO:0007669"/>
    <property type="project" value="UniProtKB-KW"/>
</dbReference>
<dbReference type="GO" id="GO:0070301">
    <property type="term" value="P:cellular response to hydrogen peroxide"/>
    <property type="evidence" value="ECO:0007669"/>
    <property type="project" value="TreeGrafter"/>
</dbReference>
<dbReference type="GO" id="GO:0042744">
    <property type="term" value="P:hydrogen peroxide catabolic process"/>
    <property type="evidence" value="ECO:0007669"/>
    <property type="project" value="UniProtKB-KW"/>
</dbReference>
<dbReference type="CDD" id="cd00649">
    <property type="entry name" value="catalase_peroxidase_1"/>
    <property type="match status" value="1"/>
</dbReference>
<dbReference type="CDD" id="cd08200">
    <property type="entry name" value="catalase_peroxidase_2"/>
    <property type="match status" value="1"/>
</dbReference>
<dbReference type="FunFam" id="1.10.420.10:FF:000002">
    <property type="entry name" value="Catalase-peroxidase"/>
    <property type="match status" value="1"/>
</dbReference>
<dbReference type="FunFam" id="1.10.420.10:FF:000004">
    <property type="entry name" value="Catalase-peroxidase"/>
    <property type="match status" value="1"/>
</dbReference>
<dbReference type="FunFam" id="1.10.520.10:FF:000002">
    <property type="entry name" value="Catalase-peroxidase"/>
    <property type="match status" value="1"/>
</dbReference>
<dbReference type="Gene3D" id="1.10.520.10">
    <property type="match status" value="2"/>
</dbReference>
<dbReference type="Gene3D" id="1.10.420.10">
    <property type="entry name" value="Peroxidase, domain 2"/>
    <property type="match status" value="2"/>
</dbReference>
<dbReference type="HAMAP" id="MF_01961">
    <property type="entry name" value="Catal_peroxid"/>
    <property type="match status" value="1"/>
</dbReference>
<dbReference type="InterPro" id="IPR000763">
    <property type="entry name" value="Catalase_peroxidase"/>
</dbReference>
<dbReference type="InterPro" id="IPR002016">
    <property type="entry name" value="Haem_peroxidase"/>
</dbReference>
<dbReference type="InterPro" id="IPR010255">
    <property type="entry name" value="Haem_peroxidase_sf"/>
</dbReference>
<dbReference type="InterPro" id="IPR019794">
    <property type="entry name" value="Peroxidases_AS"/>
</dbReference>
<dbReference type="InterPro" id="IPR019793">
    <property type="entry name" value="Peroxidases_heam-ligand_BS"/>
</dbReference>
<dbReference type="NCBIfam" id="TIGR00198">
    <property type="entry name" value="cat_per_HPI"/>
    <property type="match status" value="1"/>
</dbReference>
<dbReference type="NCBIfam" id="NF011635">
    <property type="entry name" value="PRK15061.1"/>
    <property type="match status" value="1"/>
</dbReference>
<dbReference type="PANTHER" id="PTHR30555:SF0">
    <property type="entry name" value="CATALASE-PEROXIDASE"/>
    <property type="match status" value="1"/>
</dbReference>
<dbReference type="PANTHER" id="PTHR30555">
    <property type="entry name" value="HYDROPEROXIDASE I, BIFUNCTIONAL CATALASE-PEROXIDASE"/>
    <property type="match status" value="1"/>
</dbReference>
<dbReference type="Pfam" id="PF00141">
    <property type="entry name" value="peroxidase"/>
    <property type="match status" value="2"/>
</dbReference>
<dbReference type="PRINTS" id="PR00460">
    <property type="entry name" value="BPEROXIDASE"/>
</dbReference>
<dbReference type="PRINTS" id="PR00458">
    <property type="entry name" value="PEROXIDASE"/>
</dbReference>
<dbReference type="SUPFAM" id="SSF48113">
    <property type="entry name" value="Heme-dependent peroxidases"/>
    <property type="match status" value="2"/>
</dbReference>
<dbReference type="PROSITE" id="PS00435">
    <property type="entry name" value="PEROXIDASE_1"/>
    <property type="match status" value="1"/>
</dbReference>
<dbReference type="PROSITE" id="PS00436">
    <property type="entry name" value="PEROXIDASE_2"/>
    <property type="match status" value="1"/>
</dbReference>
<dbReference type="PROSITE" id="PS50873">
    <property type="entry name" value="PEROXIDASE_4"/>
    <property type="match status" value="1"/>
</dbReference>
<organism>
    <name type="scientific">Saccharopolyspora erythraea (strain ATCC 11635 / DSM 40517 / JCM 4748 / NBRC 13426 / NCIMB 8594 / NRRL 2338)</name>
    <dbReference type="NCBI Taxonomy" id="405948"/>
    <lineage>
        <taxon>Bacteria</taxon>
        <taxon>Bacillati</taxon>
        <taxon>Actinomycetota</taxon>
        <taxon>Actinomycetes</taxon>
        <taxon>Pseudonocardiales</taxon>
        <taxon>Pseudonocardiaceae</taxon>
        <taxon>Saccharopolyspora</taxon>
    </lineage>
</organism>
<sequence length="737" mass="80278">MTDSPDATTGGCPVAHGDRLPHPTQGGANTHWWPNRLNLKLLAKNPAVADPMGEEFDYAAEFKTLDLPAVKADIQEVLTTSQDWWPADFGHYGPLMIRMAWHSAGTYRVSDGRGGAGTGQQRFAPLNSWPDNVSLDKARRLLWPVKQKYGRKLSWADLMILAGNVALESMGFETFGFAGGRVDAWEPEDDVYWGAETTWLGSDQRISGGEQRELEKPLGATHMGLIYVNPEGPEGKPDPVAAARDIRETFGRMAMNDEETVALIAGGHTFGKTHGAAPDSNLGPDSEAAPLEAQGLGWHNSHGTGKGADTITSGLEVTWTSTPTQWSNGFFENLFGYEYELYQGPGGGWQWRPKDGAGEGTVPDAHDPSKKIAPNMLTTDLSLKVDPIYEPISRRFWENPQEFADAFARAWFKLTHRDMGPADRYLGPEVPSEELIWQDPIPKPDHELVGPAEIAELKGRIAESGLTVRQLVSTAWAAASTFRGSDKRGGANGGRIRLEPQRSWEVNEPDQLATVISTLEGIQESFNAGSGAKKVSFADLVVLAGGVGVEQAAQAAGFDVEVPFTPGRGDATAEQTDVESFSHLEPSSDGFRNYLGKGHPLPAEYQLVDKANLLTLSAPEMTVLVGGLRVLGANYQQSEQGVFTEKPGTLTNDFFVNLLQMGNTWKATDETSETFEATDASGQVKWTGTRFDLVFGSNSELRAVAEVYASDDAKEKFVRDFVAAWDKVMNLDRFDLA</sequence>
<name>KATG_SACEN</name>
<gene>
    <name evidence="1" type="primary">katG</name>
    <name type="ordered locus">SACE_4668</name>
</gene>